<name>CH60_CLAM3</name>
<gene>
    <name evidence="1" type="primary">groEL</name>
    <name evidence="1" type="synonym">groL</name>
    <name type="ordered locus">CMM_2478</name>
</gene>
<organism>
    <name type="scientific">Clavibacter michiganensis subsp. michiganensis (strain NCPPB 382)</name>
    <dbReference type="NCBI Taxonomy" id="443906"/>
    <lineage>
        <taxon>Bacteria</taxon>
        <taxon>Bacillati</taxon>
        <taxon>Actinomycetota</taxon>
        <taxon>Actinomycetes</taxon>
        <taxon>Micrococcales</taxon>
        <taxon>Microbacteriaceae</taxon>
        <taxon>Clavibacter</taxon>
    </lineage>
</organism>
<proteinExistence type="inferred from homology"/>
<sequence>MAKIIAFDEEARRGLERGLNILADAVRVTLGPRGRNVVLEKKWGAPTITNDGVSIAKEIELDDPFEKIGAELVKEVAKKTDDVAGDGTTTATVLAQALVREGLRNVAAGADPISLKRGIEKAVAAVTEELKAAAKEIETKEEIAATASISAGDSTIGAIIAEAIDKVGKEGVVTVEESNTFGTELELTEGMRFDKGYLSQYFVTDPERQEAVFEDAYILIVNSKISNIKDLLPIVDKVIQSGKQLLIIAEDVDGEALATLVVNKIRGIFKSVAVKAPGFGDRRKAQLQDIAILTGGQVIAEEVGLKLENVTLDLLGTARKVVITKDETTIVEGGGDATEIAARVQQIRNEIGNTDSDYDREKLQERLAKLAGGVAVIKAGAATEVELKERKHRIEDAVRNAKAAVEEGIVAGGGVALIQAGKLAFEKLQLEGDEATGANIVRVAVDAPLKQIALNAGLEPGVVAERVRNLPSGHGLNAATGEYVDMLAAGINDPVKVTRSALLNAASIAGLFLTTEAVVADKPEKNPAPAGDPTGGMDF</sequence>
<evidence type="ECO:0000255" key="1">
    <source>
        <dbReference type="HAMAP-Rule" id="MF_00600"/>
    </source>
</evidence>
<feature type="chain" id="PRO_1000025771" description="Chaperonin GroEL">
    <location>
        <begin position="1"/>
        <end position="539"/>
    </location>
</feature>
<feature type="binding site" evidence="1">
    <location>
        <begin position="29"/>
        <end position="32"/>
    </location>
    <ligand>
        <name>ATP</name>
        <dbReference type="ChEBI" id="CHEBI:30616"/>
    </ligand>
</feature>
<feature type="binding site" evidence="1">
    <location>
        <begin position="86"/>
        <end position="90"/>
    </location>
    <ligand>
        <name>ATP</name>
        <dbReference type="ChEBI" id="CHEBI:30616"/>
    </ligand>
</feature>
<feature type="binding site" evidence="1">
    <location>
        <position position="413"/>
    </location>
    <ligand>
        <name>ATP</name>
        <dbReference type="ChEBI" id="CHEBI:30616"/>
    </ligand>
</feature>
<feature type="binding site" evidence="1">
    <location>
        <begin position="477"/>
        <end position="479"/>
    </location>
    <ligand>
        <name>ATP</name>
        <dbReference type="ChEBI" id="CHEBI:30616"/>
    </ligand>
</feature>
<feature type="binding site" evidence="1">
    <location>
        <position position="493"/>
    </location>
    <ligand>
        <name>ATP</name>
        <dbReference type="ChEBI" id="CHEBI:30616"/>
    </ligand>
</feature>
<protein>
    <recommendedName>
        <fullName evidence="1">Chaperonin GroEL</fullName>
        <ecNumber evidence="1">5.6.1.7</ecNumber>
    </recommendedName>
    <alternativeName>
        <fullName evidence="1">60 kDa chaperonin</fullName>
    </alternativeName>
    <alternativeName>
        <fullName evidence="1">Chaperonin-60</fullName>
        <shortName evidence="1">Cpn60</shortName>
    </alternativeName>
</protein>
<accession>A5CTX3</accession>
<keyword id="KW-0067">ATP-binding</keyword>
<keyword id="KW-0143">Chaperone</keyword>
<keyword id="KW-0963">Cytoplasm</keyword>
<keyword id="KW-0413">Isomerase</keyword>
<keyword id="KW-0547">Nucleotide-binding</keyword>
<dbReference type="EC" id="5.6.1.7" evidence="1"/>
<dbReference type="EMBL" id="AM711867">
    <property type="protein sequence ID" value="CAN02559.1"/>
    <property type="molecule type" value="Genomic_DNA"/>
</dbReference>
<dbReference type="RefSeq" id="WP_012039166.1">
    <property type="nucleotide sequence ID" value="NC_009480.1"/>
</dbReference>
<dbReference type="SMR" id="A5CTX3"/>
<dbReference type="GeneID" id="92948475"/>
<dbReference type="KEGG" id="cmi:CMM_2478"/>
<dbReference type="eggNOG" id="COG0459">
    <property type="taxonomic scope" value="Bacteria"/>
</dbReference>
<dbReference type="HOGENOM" id="CLU_016503_3_0_11"/>
<dbReference type="OrthoDB" id="9766614at2"/>
<dbReference type="Proteomes" id="UP000001564">
    <property type="component" value="Chromosome"/>
</dbReference>
<dbReference type="GO" id="GO:0005737">
    <property type="term" value="C:cytoplasm"/>
    <property type="evidence" value="ECO:0007669"/>
    <property type="project" value="UniProtKB-SubCell"/>
</dbReference>
<dbReference type="GO" id="GO:0005524">
    <property type="term" value="F:ATP binding"/>
    <property type="evidence" value="ECO:0007669"/>
    <property type="project" value="UniProtKB-UniRule"/>
</dbReference>
<dbReference type="GO" id="GO:0140662">
    <property type="term" value="F:ATP-dependent protein folding chaperone"/>
    <property type="evidence" value="ECO:0007669"/>
    <property type="project" value="InterPro"/>
</dbReference>
<dbReference type="GO" id="GO:0016853">
    <property type="term" value="F:isomerase activity"/>
    <property type="evidence" value="ECO:0007669"/>
    <property type="project" value="UniProtKB-KW"/>
</dbReference>
<dbReference type="GO" id="GO:0051082">
    <property type="term" value="F:unfolded protein binding"/>
    <property type="evidence" value="ECO:0007669"/>
    <property type="project" value="UniProtKB-UniRule"/>
</dbReference>
<dbReference type="GO" id="GO:0042026">
    <property type="term" value="P:protein refolding"/>
    <property type="evidence" value="ECO:0007669"/>
    <property type="project" value="UniProtKB-UniRule"/>
</dbReference>
<dbReference type="CDD" id="cd03344">
    <property type="entry name" value="GroEL"/>
    <property type="match status" value="1"/>
</dbReference>
<dbReference type="FunFam" id="3.50.7.10:FF:000001">
    <property type="entry name" value="60 kDa chaperonin"/>
    <property type="match status" value="1"/>
</dbReference>
<dbReference type="Gene3D" id="3.50.7.10">
    <property type="entry name" value="GroEL"/>
    <property type="match status" value="1"/>
</dbReference>
<dbReference type="Gene3D" id="1.10.560.10">
    <property type="entry name" value="GroEL-like equatorial domain"/>
    <property type="match status" value="1"/>
</dbReference>
<dbReference type="Gene3D" id="3.30.260.10">
    <property type="entry name" value="TCP-1-like chaperonin intermediate domain"/>
    <property type="match status" value="1"/>
</dbReference>
<dbReference type="HAMAP" id="MF_00600">
    <property type="entry name" value="CH60"/>
    <property type="match status" value="1"/>
</dbReference>
<dbReference type="InterPro" id="IPR018370">
    <property type="entry name" value="Chaperonin_Cpn60_CS"/>
</dbReference>
<dbReference type="InterPro" id="IPR001844">
    <property type="entry name" value="Cpn60/GroEL"/>
</dbReference>
<dbReference type="InterPro" id="IPR002423">
    <property type="entry name" value="Cpn60/GroEL/TCP-1"/>
</dbReference>
<dbReference type="InterPro" id="IPR027409">
    <property type="entry name" value="GroEL-like_apical_dom_sf"/>
</dbReference>
<dbReference type="InterPro" id="IPR027413">
    <property type="entry name" value="GROEL-like_equatorial_sf"/>
</dbReference>
<dbReference type="InterPro" id="IPR027410">
    <property type="entry name" value="TCP-1-like_intermed_sf"/>
</dbReference>
<dbReference type="NCBIfam" id="TIGR02348">
    <property type="entry name" value="GroEL"/>
    <property type="match status" value="1"/>
</dbReference>
<dbReference type="NCBIfam" id="NF000592">
    <property type="entry name" value="PRK00013.1"/>
    <property type="match status" value="1"/>
</dbReference>
<dbReference type="NCBIfam" id="NF009487">
    <property type="entry name" value="PRK12849.1"/>
    <property type="match status" value="1"/>
</dbReference>
<dbReference type="NCBIfam" id="NF009488">
    <property type="entry name" value="PRK12850.1"/>
    <property type="match status" value="1"/>
</dbReference>
<dbReference type="NCBIfam" id="NF009489">
    <property type="entry name" value="PRK12851.1"/>
    <property type="match status" value="1"/>
</dbReference>
<dbReference type="PANTHER" id="PTHR45633">
    <property type="entry name" value="60 KDA HEAT SHOCK PROTEIN, MITOCHONDRIAL"/>
    <property type="match status" value="1"/>
</dbReference>
<dbReference type="Pfam" id="PF00118">
    <property type="entry name" value="Cpn60_TCP1"/>
    <property type="match status" value="1"/>
</dbReference>
<dbReference type="PRINTS" id="PR00298">
    <property type="entry name" value="CHAPERONIN60"/>
</dbReference>
<dbReference type="SUPFAM" id="SSF52029">
    <property type="entry name" value="GroEL apical domain-like"/>
    <property type="match status" value="1"/>
</dbReference>
<dbReference type="SUPFAM" id="SSF48592">
    <property type="entry name" value="GroEL equatorial domain-like"/>
    <property type="match status" value="1"/>
</dbReference>
<dbReference type="SUPFAM" id="SSF54849">
    <property type="entry name" value="GroEL-intermediate domain like"/>
    <property type="match status" value="1"/>
</dbReference>
<dbReference type="PROSITE" id="PS00296">
    <property type="entry name" value="CHAPERONINS_CPN60"/>
    <property type="match status" value="1"/>
</dbReference>
<reference key="1">
    <citation type="journal article" date="2008" name="J. Bacteriol.">
        <title>The genome sequence of the tomato-pathogenic actinomycete Clavibacter michiganensis subsp. michiganensis NCPPB382 reveals a large island involved in pathogenicity.</title>
        <authorList>
            <person name="Gartemann K.-H."/>
            <person name="Abt B."/>
            <person name="Bekel T."/>
            <person name="Burger A."/>
            <person name="Engemann J."/>
            <person name="Fluegel M."/>
            <person name="Gaigalat L."/>
            <person name="Goesmann A."/>
            <person name="Graefen I."/>
            <person name="Kalinowski J."/>
            <person name="Kaup O."/>
            <person name="Kirchner O."/>
            <person name="Krause L."/>
            <person name="Linke B."/>
            <person name="McHardy A."/>
            <person name="Meyer F."/>
            <person name="Pohle S."/>
            <person name="Rueckert C."/>
            <person name="Schneiker S."/>
            <person name="Zellermann E.-M."/>
            <person name="Puehler A."/>
            <person name="Eichenlaub R."/>
            <person name="Kaiser O."/>
            <person name="Bartels D."/>
        </authorList>
    </citation>
    <scope>NUCLEOTIDE SEQUENCE [LARGE SCALE GENOMIC DNA]</scope>
    <source>
        <strain>NCPPB 382</strain>
    </source>
</reference>
<comment type="function">
    <text evidence="1">Together with its co-chaperonin GroES, plays an essential role in assisting protein folding. The GroEL-GroES system forms a nano-cage that allows encapsulation of the non-native substrate proteins and provides a physical environment optimized to promote and accelerate protein folding.</text>
</comment>
<comment type="catalytic activity">
    <reaction evidence="1">
        <text>ATP + H2O + a folded polypeptide = ADP + phosphate + an unfolded polypeptide.</text>
        <dbReference type="EC" id="5.6.1.7"/>
    </reaction>
</comment>
<comment type="subunit">
    <text evidence="1">Forms a cylinder of 14 subunits composed of two heptameric rings stacked back-to-back. Interacts with the co-chaperonin GroES.</text>
</comment>
<comment type="subcellular location">
    <subcellularLocation>
        <location evidence="1">Cytoplasm</location>
    </subcellularLocation>
</comment>
<comment type="similarity">
    <text evidence="1">Belongs to the chaperonin (HSP60) family.</text>
</comment>